<accession>Q13C78</accession>
<gene>
    <name evidence="1" type="primary">nifH</name>
    <name type="ordered locus">RPD_1073</name>
</gene>
<protein>
    <recommendedName>
        <fullName evidence="1">Nitrogenase iron protein</fullName>
        <ecNumber evidence="1">1.18.6.1</ecNumber>
    </recommendedName>
    <alternativeName>
        <fullName evidence="1">Nitrogenase Fe protein</fullName>
    </alternativeName>
    <alternativeName>
        <fullName evidence="1">Nitrogenase component II</fullName>
    </alternativeName>
    <alternativeName>
        <fullName evidence="1">Nitrogenase reductase</fullName>
    </alternativeName>
</protein>
<name>NIFH_RHOPS</name>
<comment type="function">
    <text evidence="1">The key enzymatic reactions in nitrogen fixation are catalyzed by the nitrogenase complex, which has 2 components: the iron protein and the molybdenum-iron protein.</text>
</comment>
<comment type="catalytic activity">
    <reaction evidence="1">
        <text>N2 + 8 reduced [2Fe-2S]-[ferredoxin] + 16 ATP + 16 H2O = H2 + 8 oxidized [2Fe-2S]-[ferredoxin] + 2 NH4(+) + 16 ADP + 16 phosphate + 6 H(+)</text>
        <dbReference type="Rhea" id="RHEA:21448"/>
        <dbReference type="Rhea" id="RHEA-COMP:10000"/>
        <dbReference type="Rhea" id="RHEA-COMP:10001"/>
        <dbReference type="ChEBI" id="CHEBI:15377"/>
        <dbReference type="ChEBI" id="CHEBI:15378"/>
        <dbReference type="ChEBI" id="CHEBI:17997"/>
        <dbReference type="ChEBI" id="CHEBI:18276"/>
        <dbReference type="ChEBI" id="CHEBI:28938"/>
        <dbReference type="ChEBI" id="CHEBI:30616"/>
        <dbReference type="ChEBI" id="CHEBI:33737"/>
        <dbReference type="ChEBI" id="CHEBI:33738"/>
        <dbReference type="ChEBI" id="CHEBI:43474"/>
        <dbReference type="ChEBI" id="CHEBI:456216"/>
        <dbReference type="EC" id="1.18.6.1"/>
    </reaction>
</comment>
<comment type="cofactor">
    <cofactor evidence="1">
        <name>[4Fe-4S] cluster</name>
        <dbReference type="ChEBI" id="CHEBI:49883"/>
    </cofactor>
    <text evidence="1">Binds 1 [4Fe-4S] cluster per dimer.</text>
</comment>
<comment type="subunit">
    <text evidence="1">Homodimer.</text>
</comment>
<comment type="PTM">
    <text evidence="1">The reversible ADP-ribosylation of Arg-102 inactivates the nitrogenase reductase and regulates nitrogenase activity.</text>
</comment>
<comment type="similarity">
    <text evidence="1">Belongs to the NifH/BchL/ChlL family.</text>
</comment>
<proteinExistence type="inferred from homology"/>
<organism>
    <name type="scientific">Rhodopseudomonas palustris (strain BisB5)</name>
    <dbReference type="NCBI Taxonomy" id="316057"/>
    <lineage>
        <taxon>Bacteria</taxon>
        <taxon>Pseudomonadati</taxon>
        <taxon>Pseudomonadota</taxon>
        <taxon>Alphaproteobacteria</taxon>
        <taxon>Hyphomicrobiales</taxon>
        <taxon>Nitrobacteraceae</taxon>
        <taxon>Rhodopseudomonas</taxon>
    </lineage>
</organism>
<keyword id="KW-0004">4Fe-4S</keyword>
<keyword id="KW-0013">ADP-ribosylation</keyword>
<keyword id="KW-0067">ATP-binding</keyword>
<keyword id="KW-0408">Iron</keyword>
<keyword id="KW-0411">Iron-sulfur</keyword>
<keyword id="KW-0479">Metal-binding</keyword>
<keyword id="KW-0535">Nitrogen fixation</keyword>
<keyword id="KW-0547">Nucleotide-binding</keyword>
<keyword id="KW-0560">Oxidoreductase</keyword>
<reference key="1">
    <citation type="submission" date="2006-03" db="EMBL/GenBank/DDBJ databases">
        <title>Complete sequence of Rhodopseudomonas palustris BisB5.</title>
        <authorList>
            <consortium name="US DOE Joint Genome Institute"/>
            <person name="Copeland A."/>
            <person name="Lucas S."/>
            <person name="Lapidus A."/>
            <person name="Barry K."/>
            <person name="Detter J.C."/>
            <person name="Glavina del Rio T."/>
            <person name="Hammon N."/>
            <person name="Israni S."/>
            <person name="Dalin E."/>
            <person name="Tice H."/>
            <person name="Pitluck S."/>
            <person name="Chain P."/>
            <person name="Malfatti S."/>
            <person name="Shin M."/>
            <person name="Vergez L."/>
            <person name="Schmutz J."/>
            <person name="Larimer F."/>
            <person name="Land M."/>
            <person name="Hauser L."/>
            <person name="Pelletier D.A."/>
            <person name="Kyrpides N."/>
            <person name="Lykidis A."/>
            <person name="Oda Y."/>
            <person name="Harwood C.S."/>
            <person name="Richardson P."/>
        </authorList>
    </citation>
    <scope>NUCLEOTIDE SEQUENCE [LARGE SCALE GENOMIC DNA]</scope>
    <source>
        <strain>BisB5</strain>
    </source>
</reference>
<evidence type="ECO:0000255" key="1">
    <source>
        <dbReference type="HAMAP-Rule" id="MF_00533"/>
    </source>
</evidence>
<dbReference type="EC" id="1.18.6.1" evidence="1"/>
<dbReference type="EMBL" id="CP000283">
    <property type="protein sequence ID" value="ABE38311.1"/>
    <property type="molecule type" value="Genomic_DNA"/>
</dbReference>
<dbReference type="SMR" id="Q13C78"/>
<dbReference type="STRING" id="316057.RPD_1073"/>
<dbReference type="KEGG" id="rpd:RPD_1073"/>
<dbReference type="eggNOG" id="COG1348">
    <property type="taxonomic scope" value="Bacteria"/>
</dbReference>
<dbReference type="HOGENOM" id="CLU_059373_0_0_5"/>
<dbReference type="BioCyc" id="RPAL316057:RPD_RS05445-MONOMER"/>
<dbReference type="Proteomes" id="UP000001818">
    <property type="component" value="Chromosome"/>
</dbReference>
<dbReference type="GO" id="GO:0051539">
    <property type="term" value="F:4 iron, 4 sulfur cluster binding"/>
    <property type="evidence" value="ECO:0007669"/>
    <property type="project" value="UniProtKB-KW"/>
</dbReference>
<dbReference type="GO" id="GO:0005524">
    <property type="term" value="F:ATP binding"/>
    <property type="evidence" value="ECO:0007669"/>
    <property type="project" value="UniProtKB-UniRule"/>
</dbReference>
<dbReference type="GO" id="GO:0046872">
    <property type="term" value="F:metal ion binding"/>
    <property type="evidence" value="ECO:0007669"/>
    <property type="project" value="UniProtKB-KW"/>
</dbReference>
<dbReference type="GO" id="GO:0016163">
    <property type="term" value="F:nitrogenase activity"/>
    <property type="evidence" value="ECO:0007669"/>
    <property type="project" value="UniProtKB-UniRule"/>
</dbReference>
<dbReference type="GO" id="GO:0009399">
    <property type="term" value="P:nitrogen fixation"/>
    <property type="evidence" value="ECO:0007669"/>
    <property type="project" value="UniProtKB-UniRule"/>
</dbReference>
<dbReference type="CDD" id="cd02040">
    <property type="entry name" value="NifH"/>
    <property type="match status" value="1"/>
</dbReference>
<dbReference type="FunFam" id="3.40.50.300:FF:001379">
    <property type="entry name" value="Nitrogenase iron protein 1"/>
    <property type="match status" value="1"/>
</dbReference>
<dbReference type="Gene3D" id="3.40.50.300">
    <property type="entry name" value="P-loop containing nucleotide triphosphate hydrolases"/>
    <property type="match status" value="1"/>
</dbReference>
<dbReference type="HAMAP" id="MF_00533">
    <property type="entry name" value="NifH"/>
    <property type="match status" value="1"/>
</dbReference>
<dbReference type="InterPro" id="IPR030655">
    <property type="entry name" value="NifH/chlL_CS"/>
</dbReference>
<dbReference type="InterPro" id="IPR000392">
    <property type="entry name" value="NifH/frxC"/>
</dbReference>
<dbReference type="InterPro" id="IPR005977">
    <property type="entry name" value="Nitrogenase_Fe_NifH"/>
</dbReference>
<dbReference type="InterPro" id="IPR027417">
    <property type="entry name" value="P-loop_NTPase"/>
</dbReference>
<dbReference type="NCBIfam" id="TIGR01287">
    <property type="entry name" value="nifH"/>
    <property type="match status" value="1"/>
</dbReference>
<dbReference type="PANTHER" id="PTHR42864">
    <property type="entry name" value="LIGHT-INDEPENDENT PROTOCHLOROPHYLLIDE REDUCTASE IRON-SULFUR ATP-BINDING PROTEIN"/>
    <property type="match status" value="1"/>
</dbReference>
<dbReference type="PANTHER" id="PTHR42864:SF2">
    <property type="entry name" value="LIGHT-INDEPENDENT PROTOCHLOROPHYLLIDE REDUCTASE IRON-SULFUR ATP-BINDING PROTEIN"/>
    <property type="match status" value="1"/>
</dbReference>
<dbReference type="Pfam" id="PF00142">
    <property type="entry name" value="Fer4_NifH"/>
    <property type="match status" value="1"/>
</dbReference>
<dbReference type="PIRSF" id="PIRSF000363">
    <property type="entry name" value="Nitrogenase_iron"/>
    <property type="match status" value="1"/>
</dbReference>
<dbReference type="PRINTS" id="PR00091">
    <property type="entry name" value="NITROGNASEII"/>
</dbReference>
<dbReference type="SUPFAM" id="SSF52540">
    <property type="entry name" value="P-loop containing nucleoside triphosphate hydrolases"/>
    <property type="match status" value="1"/>
</dbReference>
<dbReference type="PROSITE" id="PS00746">
    <property type="entry name" value="NIFH_FRXC_1"/>
    <property type="match status" value="1"/>
</dbReference>
<dbReference type="PROSITE" id="PS00692">
    <property type="entry name" value="NIFH_FRXC_2"/>
    <property type="match status" value="1"/>
</dbReference>
<dbReference type="PROSITE" id="PS51026">
    <property type="entry name" value="NIFH_FRXC_3"/>
    <property type="match status" value="1"/>
</dbReference>
<feature type="chain" id="PRO_1000211884" description="Nitrogenase iron protein">
    <location>
        <begin position="1"/>
        <end position="299"/>
    </location>
</feature>
<feature type="binding site" evidence="1">
    <location>
        <begin position="11"/>
        <end position="18"/>
    </location>
    <ligand>
        <name>ATP</name>
        <dbReference type="ChEBI" id="CHEBI:30616"/>
    </ligand>
</feature>
<feature type="binding site" evidence="1">
    <location>
        <position position="99"/>
    </location>
    <ligand>
        <name>[4Fe-4S] cluster</name>
        <dbReference type="ChEBI" id="CHEBI:49883"/>
        <note>ligand shared between dimeric partners</note>
    </ligand>
</feature>
<feature type="binding site" evidence="1">
    <location>
        <position position="133"/>
    </location>
    <ligand>
        <name>[4Fe-4S] cluster</name>
        <dbReference type="ChEBI" id="CHEBI:49883"/>
        <note>ligand shared between dimeric partners</note>
    </ligand>
</feature>
<feature type="modified residue" description="ADP-ribosylarginine; by dinitrogenase reductase ADP-ribosyltransferase" evidence="1">
    <location>
        <position position="102"/>
    </location>
</feature>
<sequence>MAALRQIAFYGKGGIGKSTTSQNTLAALVELGQKILIVGCDPKADSTRLILNTKMQDTVLSLAAEAGSVEDLELEDVMKIGYKGIKCTEAGGPEPGVGCAGRGVITAINFLEENGAYEDVDYVSYDVLGDVVCGGFAMPIRENKAQEIYIVMSGEMMALYAANNIAKGILKYASSGGVRLGGLICNERQTDRELDLAEALAARLNSKLIHFVPRANIVQHAELRRQTVIEYAPDSQQAQEYRQLANKIHANSGNGTIPTPITMEELEGMLLDFGIMKTDEQALAELAEKEAAKAAAATA</sequence>